<organism>
    <name type="scientific">Homo sapiens</name>
    <name type="common">Human</name>
    <dbReference type="NCBI Taxonomy" id="9606"/>
    <lineage>
        <taxon>Eukaryota</taxon>
        <taxon>Metazoa</taxon>
        <taxon>Chordata</taxon>
        <taxon>Craniata</taxon>
        <taxon>Vertebrata</taxon>
        <taxon>Euteleostomi</taxon>
        <taxon>Mammalia</taxon>
        <taxon>Eutheria</taxon>
        <taxon>Euarchontoglires</taxon>
        <taxon>Primates</taxon>
        <taxon>Haplorrhini</taxon>
        <taxon>Catarrhini</taxon>
        <taxon>Hominidae</taxon>
        <taxon>Homo</taxon>
    </lineage>
</organism>
<proteinExistence type="evidence at protein level"/>
<accession>Q9P289</accession>
<accession>B2RAU2</accession>
<accession>Q3ZB77</accession>
<accession>Q8NC04</accession>
<accession>Q9BXC3</accession>
<accession>Q9BXC4</accession>
<feature type="initiator methionine" description="Removed" evidence="24 26 27">
    <location>
        <position position="1"/>
    </location>
</feature>
<feature type="chain" id="PRO_0000086404" description="Serine/threonine-protein kinase 26">
    <location>
        <begin position="2"/>
        <end position="416"/>
    </location>
</feature>
<feature type="domain" description="Protein kinase" evidence="3">
    <location>
        <begin position="24"/>
        <end position="274"/>
    </location>
</feature>
<feature type="region of interest" description="Disordered" evidence="4">
    <location>
        <begin position="297"/>
        <end position="340"/>
    </location>
</feature>
<feature type="active site" description="Proton acceptor" evidence="3">
    <location>
        <position position="144"/>
    </location>
</feature>
<feature type="binding site" evidence="3">
    <location>
        <begin position="30"/>
        <end position="38"/>
    </location>
    <ligand>
        <name>ATP</name>
        <dbReference type="ChEBI" id="CHEBI:30616"/>
    </ligand>
</feature>
<feature type="binding site" evidence="3 20">
    <location>
        <position position="53"/>
    </location>
    <ligand>
        <name>ATP</name>
        <dbReference type="ChEBI" id="CHEBI:30616"/>
    </ligand>
</feature>
<feature type="modified residue" description="N-acetylalanine" evidence="24 26 27">
    <location>
        <position position="2"/>
    </location>
</feature>
<feature type="modified residue" description="Phosphoserine" evidence="23 24 26 27 28">
    <location>
        <position position="4"/>
    </location>
</feature>
<feature type="modified residue" description="Phosphothreonine; by autocatalysis" evidence="6 23 24 25 28">
    <location>
        <position position="178"/>
    </location>
</feature>
<feature type="modified residue" description="Phosphoserine" evidence="22 24 27">
    <location>
        <position position="300"/>
    </location>
</feature>
<feature type="modified residue" description="Phosphoserine" evidence="22 27">
    <location>
        <position position="304"/>
    </location>
</feature>
<feature type="modified residue" description="Phosphoserine" evidence="22 27">
    <location>
        <position position="306"/>
    </location>
</feature>
<feature type="modified residue" description="Phosphoserine" evidence="1">
    <location>
        <position position="309"/>
    </location>
</feature>
<feature type="modified residue" description="Phosphoserine" evidence="28">
    <location>
        <position position="325"/>
    </location>
</feature>
<feature type="modified residue" description="Phosphothreonine" evidence="28">
    <location>
        <position position="327"/>
    </location>
</feature>
<feature type="modified residue" description="Phosphothreonine" evidence="28">
    <location>
        <position position="328"/>
    </location>
</feature>
<feature type="splice variant" id="VSP_041469" description="In isoform 2." evidence="18">
    <location>
        <begin position="15"/>
        <end position="91"/>
    </location>
</feature>
<feature type="splice variant" id="VSP_041470" description="In isoform 3." evidence="15">
    <location>
        <begin position="200"/>
        <end position="261"/>
    </location>
</feature>
<feature type="sequence variant" id="VAR_040844" description="In dbSNP:rs56035648." evidence="7">
    <original>Q</original>
    <variation>R</variation>
    <location>
        <position position="9"/>
    </location>
</feature>
<feature type="sequence variant" id="VAR_040845" description="In a gastric adenocarcinoma sample; somatic mutation." evidence="7">
    <original>G</original>
    <variation>W</variation>
    <location>
        <position position="36"/>
    </location>
</feature>
<feature type="sequence variant" id="VAR_040846" description="In dbSNP:rs56044451." evidence="7">
    <original>R</original>
    <variation>C</variation>
    <location>
        <position position="45"/>
    </location>
</feature>
<feature type="mutagenesis site" description="Abolished serine/threonine-protein kinase activity." evidence="14">
    <original>K</original>
    <variation>E</variation>
    <location>
        <position position="53"/>
    </location>
</feature>
<feature type="helix" evidence="35">
    <location>
        <begin position="20"/>
        <end position="23"/>
    </location>
</feature>
<feature type="strand" evidence="35">
    <location>
        <begin position="24"/>
        <end position="31"/>
    </location>
</feature>
<feature type="strand" evidence="32">
    <location>
        <begin position="32"/>
        <end position="34"/>
    </location>
</feature>
<feature type="strand" evidence="35">
    <location>
        <begin position="36"/>
        <end position="43"/>
    </location>
</feature>
<feature type="turn" evidence="35">
    <location>
        <begin position="44"/>
        <end position="46"/>
    </location>
</feature>
<feature type="strand" evidence="35">
    <location>
        <begin position="49"/>
        <end position="56"/>
    </location>
</feature>
<feature type="turn" evidence="32">
    <location>
        <begin position="58"/>
        <end position="60"/>
    </location>
</feature>
<feature type="helix" evidence="35">
    <location>
        <begin position="61"/>
        <end position="63"/>
    </location>
</feature>
<feature type="helix" evidence="35">
    <location>
        <begin position="64"/>
        <end position="76"/>
    </location>
</feature>
<feature type="strand" evidence="35">
    <location>
        <begin position="85"/>
        <end position="91"/>
    </location>
</feature>
<feature type="strand" evidence="35">
    <location>
        <begin position="94"/>
        <end position="100"/>
    </location>
</feature>
<feature type="strand" evidence="29">
    <location>
        <begin position="104"/>
        <end position="106"/>
    </location>
</feature>
<feature type="helix" evidence="35">
    <location>
        <begin position="107"/>
        <end position="111"/>
    </location>
</feature>
<feature type="helix" evidence="35">
    <location>
        <begin position="118"/>
        <end position="137"/>
    </location>
</feature>
<feature type="strand" evidence="29">
    <location>
        <begin position="138"/>
        <end position="142"/>
    </location>
</feature>
<feature type="helix" evidence="35">
    <location>
        <begin position="147"/>
        <end position="149"/>
    </location>
</feature>
<feature type="strand" evidence="35">
    <location>
        <begin position="150"/>
        <end position="152"/>
    </location>
</feature>
<feature type="strand" evidence="35">
    <location>
        <begin position="158"/>
        <end position="160"/>
    </location>
</feature>
<feature type="turn" evidence="32">
    <location>
        <begin position="162"/>
        <end position="164"/>
    </location>
</feature>
<feature type="turn" evidence="31">
    <location>
        <begin position="172"/>
        <end position="174"/>
    </location>
</feature>
<feature type="turn" evidence="31">
    <location>
        <begin position="176"/>
        <end position="178"/>
    </location>
</feature>
<feature type="helix" evidence="35">
    <location>
        <begin position="188"/>
        <end position="191"/>
    </location>
</feature>
<feature type="helix" evidence="35">
    <location>
        <begin position="199"/>
        <end position="214"/>
    </location>
</feature>
<feature type="turn" evidence="35">
    <location>
        <begin position="218"/>
        <end position="221"/>
    </location>
</feature>
<feature type="helix" evidence="35">
    <location>
        <begin position="224"/>
        <end position="233"/>
    </location>
</feature>
<feature type="strand" evidence="31">
    <location>
        <begin position="241"/>
        <end position="243"/>
    </location>
</feature>
<feature type="helix" evidence="35">
    <location>
        <begin position="245"/>
        <end position="254"/>
    </location>
</feature>
<feature type="helix" evidence="35">
    <location>
        <begin position="259"/>
        <end position="261"/>
    </location>
</feature>
<feature type="helix" evidence="35">
    <location>
        <begin position="265"/>
        <end position="268"/>
    </location>
</feature>
<feature type="helix" evidence="35">
    <location>
        <begin position="272"/>
        <end position="277"/>
    </location>
</feature>
<feature type="helix" evidence="35">
    <location>
        <begin position="282"/>
        <end position="296"/>
    </location>
</feature>
<feature type="strand" evidence="34">
    <location>
        <begin position="329"/>
        <end position="331"/>
    </location>
</feature>
<feature type="helix" evidence="30">
    <location>
        <begin position="346"/>
        <end position="350"/>
    </location>
</feature>
<feature type="helix" evidence="33">
    <location>
        <begin position="352"/>
        <end position="355"/>
    </location>
</feature>
<feature type="helix" evidence="33">
    <location>
        <begin position="357"/>
        <end position="366"/>
    </location>
</feature>
<feature type="turn" evidence="30">
    <location>
        <begin position="367"/>
        <end position="370"/>
    </location>
</feature>
<feature type="helix" evidence="33">
    <location>
        <begin position="372"/>
        <end position="391"/>
    </location>
</feature>
<feature type="helix" evidence="33">
    <location>
        <begin position="395"/>
        <end position="409"/>
    </location>
</feature>
<dbReference type="EC" id="2.7.11.1" evidence="5 14"/>
<dbReference type="EMBL" id="AF231012">
    <property type="protein sequence ID" value="AAK38484.1"/>
    <property type="molecule type" value="mRNA"/>
</dbReference>
<dbReference type="EMBL" id="AF344882">
    <property type="protein sequence ID" value="AAK29620.1"/>
    <property type="molecule type" value="mRNA"/>
</dbReference>
<dbReference type="EMBL" id="AF344883">
    <property type="protein sequence ID" value="AAK29621.1"/>
    <property type="molecule type" value="mRNA"/>
</dbReference>
<dbReference type="EMBL" id="AB040057">
    <property type="protein sequence ID" value="BAA92785.2"/>
    <property type="molecule type" value="mRNA"/>
</dbReference>
<dbReference type="EMBL" id="BT020099">
    <property type="protein sequence ID" value="AAV38902.1"/>
    <property type="molecule type" value="mRNA"/>
</dbReference>
<dbReference type="EMBL" id="AK075107">
    <property type="protein sequence ID" value="BAC11406.1"/>
    <property type="molecule type" value="mRNA"/>
</dbReference>
<dbReference type="EMBL" id="AK314356">
    <property type="protein sequence ID" value="BAG36989.1"/>
    <property type="molecule type" value="mRNA"/>
</dbReference>
<dbReference type="EMBL" id="AL109749">
    <property type="status" value="NOT_ANNOTATED_CDS"/>
    <property type="molecule type" value="Genomic_DNA"/>
</dbReference>
<dbReference type="EMBL" id="CH471107">
    <property type="protein sequence ID" value="EAX11786.1"/>
    <property type="molecule type" value="Genomic_DNA"/>
</dbReference>
<dbReference type="EMBL" id="CH471107">
    <property type="protein sequence ID" value="EAX11787.1"/>
    <property type="molecule type" value="Genomic_DNA"/>
</dbReference>
<dbReference type="EMBL" id="BC098315">
    <property type="protein sequence ID" value="AAH98315.1"/>
    <property type="molecule type" value="mRNA"/>
</dbReference>
<dbReference type="EMBL" id="BC103503">
    <property type="protein sequence ID" value="AAI03504.1"/>
    <property type="molecule type" value="mRNA"/>
</dbReference>
<dbReference type="CCDS" id="CCDS14631.1">
    <molecule id="Q9P289-1"/>
</dbReference>
<dbReference type="CCDS" id="CCDS43995.1">
    <molecule id="Q9P289-3"/>
</dbReference>
<dbReference type="CCDS" id="CCDS48168.1">
    <molecule id="Q9P289-2"/>
</dbReference>
<dbReference type="RefSeq" id="NP_001035917.1">
    <molecule id="Q9P289-3"/>
    <property type="nucleotide sequence ID" value="NM_001042452.2"/>
</dbReference>
<dbReference type="RefSeq" id="NP_001035918.1">
    <molecule id="Q9P289-2"/>
    <property type="nucleotide sequence ID" value="NM_001042453.2"/>
</dbReference>
<dbReference type="RefSeq" id="NP_057626.2">
    <molecule id="Q9P289-1"/>
    <property type="nucleotide sequence ID" value="NM_016542.3"/>
</dbReference>
<dbReference type="PDB" id="3GGF">
    <property type="method" value="X-ray"/>
    <property type="resolution" value="2.35 A"/>
    <property type="chains" value="A/B=1-300"/>
</dbReference>
<dbReference type="PDB" id="3W8I">
    <property type="method" value="X-ray"/>
    <property type="resolution" value="2.40 A"/>
    <property type="chains" value="B=346-416"/>
</dbReference>
<dbReference type="PDB" id="4FZA">
    <property type="method" value="X-ray"/>
    <property type="resolution" value="3.15 A"/>
    <property type="chains" value="B=18-297"/>
</dbReference>
<dbReference type="PDB" id="4FZD">
    <property type="method" value="X-ray"/>
    <property type="resolution" value="3.25 A"/>
    <property type="chains" value="B=18-297, C=323-327"/>
</dbReference>
<dbReference type="PDB" id="4FZF">
    <property type="method" value="X-ray"/>
    <property type="resolution" value="3.64 A"/>
    <property type="chains" value="B=18-297"/>
</dbReference>
<dbReference type="PDB" id="4GEH">
    <property type="method" value="X-ray"/>
    <property type="resolution" value="1.95 A"/>
    <property type="chains" value="B/D=325-413"/>
</dbReference>
<dbReference type="PDB" id="5XY9">
    <property type="method" value="X-ray"/>
    <property type="resolution" value="2.30 A"/>
    <property type="chains" value="C/D=314-325"/>
</dbReference>
<dbReference type="PDB" id="5YF4">
    <property type="method" value="X-ray"/>
    <property type="resolution" value="1.90 A"/>
    <property type="chains" value="B=320-335"/>
</dbReference>
<dbReference type="PDB" id="7B36">
    <property type="method" value="X-ray"/>
    <property type="resolution" value="2.11 A"/>
    <property type="chains" value="A/C=1-300"/>
</dbReference>
<dbReference type="PDBsum" id="3GGF"/>
<dbReference type="PDBsum" id="3W8I"/>
<dbReference type="PDBsum" id="4FZA"/>
<dbReference type="PDBsum" id="4FZD"/>
<dbReference type="PDBsum" id="4FZF"/>
<dbReference type="PDBsum" id="4GEH"/>
<dbReference type="PDBsum" id="5XY9"/>
<dbReference type="PDBsum" id="5YF4"/>
<dbReference type="PDBsum" id="7B36"/>
<dbReference type="SMR" id="Q9P289"/>
<dbReference type="BioGRID" id="119722">
    <property type="interactions" value="238"/>
</dbReference>
<dbReference type="CORUM" id="Q9P289"/>
<dbReference type="DIP" id="DIP-34049N"/>
<dbReference type="FunCoup" id="Q9P289">
    <property type="interactions" value="1696"/>
</dbReference>
<dbReference type="IntAct" id="Q9P289">
    <property type="interactions" value="108"/>
</dbReference>
<dbReference type="MINT" id="Q9P289"/>
<dbReference type="STRING" id="9606.ENSP00000377867"/>
<dbReference type="BindingDB" id="Q9P289"/>
<dbReference type="ChEMBL" id="CHEMBL5941"/>
<dbReference type="DrugBank" id="DB07853">
    <property type="generic name" value="2-[4-[4-[(5-cyclopropyl-1H-pyrazol-3-yl)amino]quinazolin-2-yl]iminocyclohexa-2,5-dien-1-yl]acetonitrile"/>
</dbReference>
<dbReference type="DrugBank" id="DB12010">
    <property type="generic name" value="Fostamatinib"/>
</dbReference>
<dbReference type="DrugCentral" id="Q9P289"/>
<dbReference type="GlyGen" id="Q9P289">
    <property type="glycosylation" value="1 site, 1 O-linked glycan (1 site)"/>
</dbReference>
<dbReference type="iPTMnet" id="Q9P289"/>
<dbReference type="PhosphoSitePlus" id="Q9P289"/>
<dbReference type="SwissPalm" id="Q9P289"/>
<dbReference type="BioMuta" id="STK26"/>
<dbReference type="DMDM" id="73621232"/>
<dbReference type="jPOST" id="Q9P289"/>
<dbReference type="MassIVE" id="Q9P289"/>
<dbReference type="PaxDb" id="9606-ENSP00000377867"/>
<dbReference type="PeptideAtlas" id="Q9P289"/>
<dbReference type="ProteomicsDB" id="83756">
    <molecule id="Q9P289-1"/>
</dbReference>
<dbReference type="ProteomicsDB" id="83757">
    <molecule id="Q9P289-2"/>
</dbReference>
<dbReference type="ProteomicsDB" id="83758">
    <molecule id="Q9P289-3"/>
</dbReference>
<dbReference type="Pumba" id="Q9P289"/>
<dbReference type="Antibodypedia" id="30220">
    <property type="antibodies" value="297 antibodies from 37 providers"/>
</dbReference>
<dbReference type="DNASU" id="51765"/>
<dbReference type="Ensembl" id="ENST00000394334.7">
    <molecule id="Q9P289-1"/>
    <property type="protein sequence ID" value="ENSP00000377867.2"/>
    <property type="gene ID" value="ENSG00000134602.16"/>
</dbReference>
<dbReference type="Ensembl" id="ENST00000394335.6">
    <molecule id="Q9P289-2"/>
    <property type="protein sequence ID" value="ENSP00000377868.2"/>
    <property type="gene ID" value="ENSG00000134602.16"/>
</dbReference>
<dbReference type="Ensembl" id="ENST00000496850.1">
    <molecule id="Q9P289-3"/>
    <property type="protein sequence ID" value="ENSP00000419702.1"/>
    <property type="gene ID" value="ENSG00000134602.16"/>
</dbReference>
<dbReference type="GeneID" id="51765"/>
<dbReference type="KEGG" id="hsa:51765"/>
<dbReference type="MANE-Select" id="ENST00000394334.7">
    <property type="protein sequence ID" value="ENSP00000377867.2"/>
    <property type="RefSeq nucleotide sequence ID" value="NM_016542.4"/>
    <property type="RefSeq protein sequence ID" value="NP_057626.2"/>
</dbReference>
<dbReference type="UCSC" id="uc004ewk.2">
    <molecule id="Q9P289-1"/>
    <property type="organism name" value="human"/>
</dbReference>
<dbReference type="AGR" id="HGNC:18174"/>
<dbReference type="CTD" id="51765"/>
<dbReference type="DisGeNET" id="51765"/>
<dbReference type="GeneCards" id="STK26"/>
<dbReference type="HGNC" id="HGNC:18174">
    <property type="gene designation" value="STK26"/>
</dbReference>
<dbReference type="HPA" id="ENSG00000134602">
    <property type="expression patterns" value="Tissue enhanced (bone marrow, epididymis)"/>
</dbReference>
<dbReference type="MIM" id="300547">
    <property type="type" value="gene"/>
</dbReference>
<dbReference type="neXtProt" id="NX_Q9P289"/>
<dbReference type="OpenTargets" id="ENSG00000134602"/>
<dbReference type="VEuPathDB" id="HostDB:ENSG00000134602"/>
<dbReference type="eggNOG" id="KOG0201">
    <property type="taxonomic scope" value="Eukaryota"/>
</dbReference>
<dbReference type="GeneTree" id="ENSGT00940000157904"/>
<dbReference type="HOGENOM" id="CLU_000288_63_23_1"/>
<dbReference type="InParanoid" id="Q9P289"/>
<dbReference type="OrthoDB" id="8693905at2759"/>
<dbReference type="PAN-GO" id="Q9P289">
    <property type="GO annotations" value="5 GO annotations based on evolutionary models"/>
</dbReference>
<dbReference type="PhylomeDB" id="Q9P289"/>
<dbReference type="PathwayCommons" id="Q9P289"/>
<dbReference type="Reactome" id="R-HSA-111465">
    <property type="pathway name" value="Apoptotic cleavage of cellular proteins"/>
</dbReference>
<dbReference type="SignaLink" id="Q9P289"/>
<dbReference type="SIGNOR" id="Q9P289"/>
<dbReference type="BioGRID-ORCS" id="51765">
    <property type="hits" value="18 hits in 777 CRISPR screens"/>
</dbReference>
<dbReference type="ChiTaRS" id="STK26">
    <property type="organism name" value="human"/>
</dbReference>
<dbReference type="EvolutionaryTrace" id="Q9P289"/>
<dbReference type="GeneWiki" id="MST4"/>
<dbReference type="GenomeRNAi" id="51765"/>
<dbReference type="Pharos" id="Q9P289">
    <property type="development level" value="Tchem"/>
</dbReference>
<dbReference type="PRO" id="PR:Q9P289"/>
<dbReference type="Proteomes" id="UP000005640">
    <property type="component" value="Chromosome X"/>
</dbReference>
<dbReference type="RNAct" id="Q9P289">
    <property type="molecule type" value="protein"/>
</dbReference>
<dbReference type="Bgee" id="ENSG00000134602">
    <property type="expression patterns" value="Expressed in germinal epithelium of ovary and 175 other cell types or tissues"/>
</dbReference>
<dbReference type="ExpressionAtlas" id="Q9P289">
    <property type="expression patterns" value="baseline and differential"/>
</dbReference>
<dbReference type="GO" id="GO:0016324">
    <property type="term" value="C:apical plasma membrane"/>
    <property type="evidence" value="ECO:0000314"/>
    <property type="project" value="UniProtKB"/>
</dbReference>
<dbReference type="GO" id="GO:0071944">
    <property type="term" value="C:cell periphery"/>
    <property type="evidence" value="ECO:0000314"/>
    <property type="project" value="UniProtKB"/>
</dbReference>
<dbReference type="GO" id="GO:0005737">
    <property type="term" value="C:cytoplasm"/>
    <property type="evidence" value="ECO:0000314"/>
    <property type="project" value="UniProtKB"/>
</dbReference>
<dbReference type="GO" id="GO:0005829">
    <property type="term" value="C:cytosol"/>
    <property type="evidence" value="ECO:0000314"/>
    <property type="project" value="UniProtKB"/>
</dbReference>
<dbReference type="GO" id="GO:0070062">
    <property type="term" value="C:extracellular exosome"/>
    <property type="evidence" value="ECO:0007005"/>
    <property type="project" value="UniProtKB"/>
</dbReference>
<dbReference type="GO" id="GO:0090443">
    <property type="term" value="C:FAR/SIN/STRIPAK complex"/>
    <property type="evidence" value="ECO:0000314"/>
    <property type="project" value="UniProtKB"/>
</dbReference>
<dbReference type="GO" id="GO:0005794">
    <property type="term" value="C:Golgi apparatus"/>
    <property type="evidence" value="ECO:0000314"/>
    <property type="project" value="UniProtKB"/>
</dbReference>
<dbReference type="GO" id="GO:0005798">
    <property type="term" value="C:Golgi-associated vesicle"/>
    <property type="evidence" value="ECO:0000314"/>
    <property type="project" value="UniProtKB"/>
</dbReference>
<dbReference type="GO" id="GO:0016020">
    <property type="term" value="C:membrane"/>
    <property type="evidence" value="ECO:0000314"/>
    <property type="project" value="UniProtKB"/>
</dbReference>
<dbReference type="GO" id="GO:0048471">
    <property type="term" value="C:perinuclear region of cytoplasm"/>
    <property type="evidence" value="ECO:0000314"/>
    <property type="project" value="UniProtKB"/>
</dbReference>
<dbReference type="GO" id="GO:0012506">
    <property type="term" value="C:vesicle membrane"/>
    <property type="evidence" value="ECO:0000304"/>
    <property type="project" value="UniProtKB"/>
</dbReference>
<dbReference type="GO" id="GO:0005524">
    <property type="term" value="F:ATP binding"/>
    <property type="evidence" value="ECO:0000314"/>
    <property type="project" value="UniProtKB"/>
</dbReference>
<dbReference type="GO" id="GO:0042802">
    <property type="term" value="F:identical protein binding"/>
    <property type="evidence" value="ECO:0000353"/>
    <property type="project" value="IntAct"/>
</dbReference>
<dbReference type="GO" id="GO:0000287">
    <property type="term" value="F:magnesium ion binding"/>
    <property type="evidence" value="ECO:0000314"/>
    <property type="project" value="UniProtKB"/>
</dbReference>
<dbReference type="GO" id="GO:0042803">
    <property type="term" value="F:protein homodimerization activity"/>
    <property type="evidence" value="ECO:0000353"/>
    <property type="project" value="UniProtKB"/>
</dbReference>
<dbReference type="GO" id="GO:0004672">
    <property type="term" value="F:protein kinase activity"/>
    <property type="evidence" value="ECO:0000314"/>
    <property type="project" value="UniProtKB"/>
</dbReference>
<dbReference type="GO" id="GO:0106310">
    <property type="term" value="F:protein serine kinase activity"/>
    <property type="evidence" value="ECO:0007669"/>
    <property type="project" value="RHEA"/>
</dbReference>
<dbReference type="GO" id="GO:0004674">
    <property type="term" value="F:protein serine/threonine kinase activity"/>
    <property type="evidence" value="ECO:0000318"/>
    <property type="project" value="GO_Central"/>
</dbReference>
<dbReference type="GO" id="GO:0006915">
    <property type="term" value="P:apoptotic process"/>
    <property type="evidence" value="ECO:0007669"/>
    <property type="project" value="UniProtKB-KW"/>
</dbReference>
<dbReference type="GO" id="GO:0034599">
    <property type="term" value="P:cellular response to oxidative stress"/>
    <property type="evidence" value="ECO:0000314"/>
    <property type="project" value="UniProtKB"/>
</dbReference>
<dbReference type="GO" id="GO:0009267">
    <property type="term" value="P:cellular response to starvation"/>
    <property type="evidence" value="ECO:0000315"/>
    <property type="project" value="UniProtKB"/>
</dbReference>
<dbReference type="GO" id="GO:0035556">
    <property type="term" value="P:intracellular signal transduction"/>
    <property type="evidence" value="ECO:0000315"/>
    <property type="project" value="UniProtKB"/>
</dbReference>
<dbReference type="GO" id="GO:0030033">
    <property type="term" value="P:microvillus assembly"/>
    <property type="evidence" value="ECO:0000314"/>
    <property type="project" value="UniProtKB"/>
</dbReference>
<dbReference type="GO" id="GO:0030336">
    <property type="term" value="P:negative regulation of cell migration"/>
    <property type="evidence" value="ECO:0000315"/>
    <property type="project" value="UniProtKB"/>
</dbReference>
<dbReference type="GO" id="GO:0046777">
    <property type="term" value="P:protein autophosphorylation"/>
    <property type="evidence" value="ECO:0000315"/>
    <property type="project" value="UniProtKB"/>
</dbReference>
<dbReference type="GO" id="GO:0006468">
    <property type="term" value="P:protein phosphorylation"/>
    <property type="evidence" value="ECO:0000314"/>
    <property type="project" value="UniProtKB"/>
</dbReference>
<dbReference type="GO" id="GO:0042981">
    <property type="term" value="P:regulation of apoptotic process"/>
    <property type="evidence" value="ECO:0000314"/>
    <property type="project" value="UniProtKB"/>
</dbReference>
<dbReference type="CDD" id="cd06640">
    <property type="entry name" value="STKc_MST4"/>
    <property type="match status" value="1"/>
</dbReference>
<dbReference type="FunFam" id="1.10.510.10:FF:000411">
    <property type="entry name" value="Probable Ste20-like kinase Don3"/>
    <property type="match status" value="1"/>
</dbReference>
<dbReference type="FunFam" id="1.10.12.70:FF:000004">
    <property type="entry name" value="Serine/threonine-protein kinase 26"/>
    <property type="match status" value="1"/>
</dbReference>
<dbReference type="FunFam" id="3.30.200.20:FF:000252">
    <property type="entry name" value="Serine/threonine-protein kinase 26"/>
    <property type="match status" value="1"/>
</dbReference>
<dbReference type="Gene3D" id="1.10.12.70">
    <property type="match status" value="1"/>
</dbReference>
<dbReference type="Gene3D" id="3.30.200.20">
    <property type="entry name" value="Phosphorylase Kinase, domain 1"/>
    <property type="match status" value="1"/>
</dbReference>
<dbReference type="Gene3D" id="1.10.510.10">
    <property type="entry name" value="Transferase(Phosphotransferase) domain 1"/>
    <property type="match status" value="1"/>
</dbReference>
<dbReference type="InterPro" id="IPR011009">
    <property type="entry name" value="Kinase-like_dom_sf"/>
</dbReference>
<dbReference type="InterPro" id="IPR046409">
    <property type="entry name" value="PDC10_dimerisation_sf"/>
</dbReference>
<dbReference type="InterPro" id="IPR048288">
    <property type="entry name" value="PDCD10_N"/>
</dbReference>
<dbReference type="InterPro" id="IPR000719">
    <property type="entry name" value="Prot_kinase_dom"/>
</dbReference>
<dbReference type="InterPro" id="IPR017441">
    <property type="entry name" value="Protein_kinase_ATP_BS"/>
</dbReference>
<dbReference type="InterPro" id="IPR050629">
    <property type="entry name" value="STE20/SPS1-PAK"/>
</dbReference>
<dbReference type="InterPro" id="IPR035056">
    <property type="entry name" value="STK_MST4"/>
</dbReference>
<dbReference type="PANTHER" id="PTHR48012:SF7">
    <property type="entry name" value="SERINE_THREONINE-PROTEIN KINASE 26"/>
    <property type="match status" value="1"/>
</dbReference>
<dbReference type="PANTHER" id="PTHR48012">
    <property type="entry name" value="STERILE20-LIKE KINASE, ISOFORM B-RELATED"/>
    <property type="match status" value="1"/>
</dbReference>
<dbReference type="Pfam" id="PF20929">
    <property type="entry name" value="PDCD10_N"/>
    <property type="match status" value="1"/>
</dbReference>
<dbReference type="Pfam" id="PF00069">
    <property type="entry name" value="Pkinase"/>
    <property type="match status" value="1"/>
</dbReference>
<dbReference type="SMART" id="SM00220">
    <property type="entry name" value="S_TKc"/>
    <property type="match status" value="1"/>
</dbReference>
<dbReference type="SUPFAM" id="SSF56112">
    <property type="entry name" value="Protein kinase-like (PK-like)"/>
    <property type="match status" value="1"/>
</dbReference>
<dbReference type="PROSITE" id="PS00107">
    <property type="entry name" value="PROTEIN_KINASE_ATP"/>
    <property type="match status" value="1"/>
</dbReference>
<dbReference type="PROSITE" id="PS50011">
    <property type="entry name" value="PROTEIN_KINASE_DOM"/>
    <property type="match status" value="1"/>
</dbReference>
<keyword id="KW-0002">3D-structure</keyword>
<keyword id="KW-0007">Acetylation</keyword>
<keyword id="KW-0025">Alternative splicing</keyword>
<keyword id="KW-0053">Apoptosis</keyword>
<keyword id="KW-0067">ATP-binding</keyword>
<keyword id="KW-0963">Cytoplasm</keyword>
<keyword id="KW-0333">Golgi apparatus</keyword>
<keyword id="KW-0418">Kinase</keyword>
<keyword id="KW-0460">Magnesium</keyword>
<keyword id="KW-0479">Metal-binding</keyword>
<keyword id="KW-0547">Nucleotide-binding</keyword>
<keyword id="KW-0597">Phosphoprotein</keyword>
<keyword id="KW-1267">Proteomics identification</keyword>
<keyword id="KW-1185">Reference proteome</keyword>
<keyword id="KW-0723">Serine/threonine-protein kinase</keyword>
<keyword id="KW-0808">Transferase</keyword>
<protein>
    <recommendedName>
        <fullName evidence="19">Serine/threonine-protein kinase 26</fullName>
        <ecNumber evidence="5 14">2.7.11.1</ecNumber>
    </recommendedName>
    <alternativeName>
        <fullName evidence="17">MST3 and SOK1-related kinase</fullName>
    </alternativeName>
    <alternativeName>
        <fullName evidence="16">Mammalian STE20-like protein kinase 4</fullName>
        <shortName evidence="19">MST-4</shortName>
        <shortName evidence="19">STE20-like kinase MST4</shortName>
    </alternativeName>
    <alternativeName>
        <fullName evidence="19">Serine/threonine-protein kinase MASK</fullName>
    </alternativeName>
</protein>
<comment type="function">
    <text evidence="5 8 9 13 14">Serine/threonine-protein kinase that acts as a mediator of cell growth (PubMed:11641781, PubMed:17360971). Modulates apoptosis (PubMed:11641781, PubMed:17360971). In association with STK24 negatively regulates Golgi reorientation in polarized cell migration upon RHO activation (PubMed:27807006). Phosphorylates ATG4B at 'Ser-383', thereby increasing autophagic flux (PubMed:29232556). Part of the striatin-interacting phosphatase and kinase (STRIPAK) complexes. STRIPAK complexes have critical roles in protein (de)phosphorylation and are regulators of multiple signaling pathways including Hippo, MAPK, nuclear receptor and cytoskeleton remodeling. Different types of STRIPAK complexes are involved in a variety of biological processes such as cell growth, differentiation, apoptosis, metabolism and immune regulation (PubMed:18782753).</text>
</comment>
<comment type="catalytic activity">
    <reaction evidence="5 14">
        <text>L-seryl-[protein] + ATP = O-phospho-L-seryl-[protein] + ADP + H(+)</text>
        <dbReference type="Rhea" id="RHEA:17989"/>
        <dbReference type="Rhea" id="RHEA-COMP:9863"/>
        <dbReference type="Rhea" id="RHEA-COMP:11604"/>
        <dbReference type="ChEBI" id="CHEBI:15378"/>
        <dbReference type="ChEBI" id="CHEBI:29999"/>
        <dbReference type="ChEBI" id="CHEBI:30616"/>
        <dbReference type="ChEBI" id="CHEBI:83421"/>
        <dbReference type="ChEBI" id="CHEBI:456216"/>
        <dbReference type="EC" id="2.7.11.1"/>
    </reaction>
</comment>
<comment type="catalytic activity">
    <reaction evidence="5">
        <text>L-threonyl-[protein] + ATP = O-phospho-L-threonyl-[protein] + ADP + H(+)</text>
        <dbReference type="Rhea" id="RHEA:46608"/>
        <dbReference type="Rhea" id="RHEA-COMP:11060"/>
        <dbReference type="Rhea" id="RHEA-COMP:11605"/>
        <dbReference type="ChEBI" id="CHEBI:15378"/>
        <dbReference type="ChEBI" id="CHEBI:30013"/>
        <dbReference type="ChEBI" id="CHEBI:30616"/>
        <dbReference type="ChEBI" id="CHEBI:61977"/>
        <dbReference type="ChEBI" id="CHEBI:456216"/>
        <dbReference type="EC" id="2.7.11.1"/>
    </reaction>
</comment>
<comment type="cofactor">
    <cofactor evidence="2">
        <name>Mg(2+)</name>
        <dbReference type="ChEBI" id="CHEBI:18420"/>
    </cofactor>
</comment>
<comment type="activity regulation">
    <text evidence="6">Interaction with Golgi matrix protein GOLGA2 leads to autophosphorylation on Thr-178, possibly as a consequence of stabilization of dimer formation. May also be activated by C-terminal cleavage.</text>
</comment>
<comment type="subunit">
    <text evidence="6 8 9 10 11 12 13">Homodimer (PubMed:20730082). Interacts with PDCD10 (PubMed:17360971, PubMed:19370760, PubMed:20332113). Interacts with GOLGA2 (PubMed:15037601, PubMed:20332113). Interacts with CTTNBP2NL (PubMed:18782753). Interacts with RIPOR1 (via C-terminus); this interaction occurs in a PDCD10-dependent and Rho-independent manner (PubMed:27807006). Interacts with PDCD10; this interaction is required for the association of STK26 with RIPOR1 (PubMed:27807006). Part of the core of STRIPAK complexes composed of PP2A catalytic and scaffolding subunits, the striatins (PP2A regulatory subunits), the striatin-associated proteins MOB4, STRIP1 and STRIP2, PDCD10 and members of the STE20 kinases, such as STK24 and STK26 (PubMed:18782753).</text>
</comment>
<comment type="interaction">
    <interactant intactId="EBI-618239">
        <id>Q9P289</id>
    </interactant>
    <interactant intactId="EBI-306905">
        <id>Q9Y376</id>
        <label>CAB39</label>
    </interactant>
    <organismsDiffer>false</organismsDiffer>
    <experiments>6</experiments>
</comment>
<comment type="interaction">
    <interactant intactId="EBI-618239">
        <id>Q9P289</id>
    </interactant>
    <interactant intactId="EBI-349854">
        <id>P13569</id>
        <label>CFTR</label>
    </interactant>
    <organismsDiffer>false</organismsDiffer>
    <experiments>6</experiments>
</comment>
<comment type="interaction">
    <interactant intactId="EBI-618239">
        <id>Q9P289</id>
    </interactant>
    <interactant intactId="EBI-1774273">
        <id>Q9P2B4</id>
        <label>CTTNBP2NL</label>
    </interactant>
    <organismsDiffer>false</organismsDiffer>
    <experiments>6</experiments>
</comment>
<comment type="interaction">
    <interactant intactId="EBI-618239">
        <id>Q9P289</id>
    </interactant>
    <interactant intactId="EBI-618309">
        <id>Q08379</id>
        <label>GOLGA2</label>
    </interactant>
    <organismsDiffer>false</organismsDiffer>
    <experiments>7</experiments>
</comment>
<comment type="interaction">
    <interactant intactId="EBI-618239">
        <id>Q9P289</id>
    </interactant>
    <interactant intactId="EBI-740195">
        <id>Q9BUL8</id>
        <label>PDCD10</label>
    </interactant>
    <organismsDiffer>false</organismsDiffer>
    <experiments>11</experiments>
</comment>
<comment type="interaction">
    <interactant intactId="EBI-618239">
        <id>Q9P289</id>
    </interactant>
    <interactant intactId="EBI-618239">
        <id>Q9P289</id>
        <label>STK26</label>
    </interactant>
    <organismsDiffer>false</organismsDiffer>
    <experiments>4</experiments>
</comment>
<comment type="interaction">
    <interactant intactId="EBI-618239">
        <id>Q9P289</id>
    </interactant>
    <interactant intactId="EBI-1773588">
        <id>Q5VSL9</id>
        <label>STRIP1</label>
    </interactant>
    <organismsDiffer>false</organismsDiffer>
    <experiments>4</experiments>
</comment>
<comment type="interaction">
    <interactant intactId="EBI-15996971">
        <id>Q9P289-1</id>
    </interactant>
    <interactant intactId="EBI-306905">
        <id>Q9Y376</id>
        <label>CAB39</label>
    </interactant>
    <organismsDiffer>false</organismsDiffer>
    <experiments>10</experiments>
</comment>
<comment type="interaction">
    <interactant intactId="EBI-15996971">
        <id>Q9P289-1</id>
    </interactant>
    <interactant intactId="EBI-740195">
        <id>Q9BUL8</id>
        <label>PDCD10</label>
    </interactant>
    <organismsDiffer>false</organismsDiffer>
    <experiments>10</experiments>
</comment>
<comment type="subcellular location">
    <subcellularLocation>
        <location evidence="8 13">Cytoplasm</location>
    </subcellularLocation>
    <subcellularLocation>
        <location evidence="6 13">Golgi apparatus</location>
    </subcellularLocation>
    <text evidence="13">Colocalized with RIPOR1 in the Golgi of serum-starved cells and relocated to cytoplasmic punctae, probably vesicular compartments, along with RIPOR1 upon serum stimulation in a Rho- and PDCD10-dependent manner (PubMed:27807006).</text>
</comment>
<comment type="alternative products">
    <event type="alternative splicing"/>
    <isoform>
        <id>Q9P289-1</id>
        <name>1</name>
        <sequence type="displayed"/>
    </isoform>
    <isoform>
        <id>Q9P289-2</id>
        <name>2</name>
        <sequence type="described" ref="VSP_041469"/>
    </isoform>
    <isoform>
        <id>Q9P289-3</id>
        <name>3</name>
        <name>MST4a</name>
        <sequence type="described" ref="VSP_041470"/>
    </isoform>
</comment>
<comment type="similarity">
    <text evidence="19">Belongs to the protein kinase superfamily. STE Ser/Thr protein kinase family. STE20 subfamily.</text>
</comment>
<reference key="1">
    <citation type="journal article" date="2001" name="Oncogene">
        <title>MST4, a new Ste20-related kinase that mediates cell growth and transformation via modulating ERK pathway.</title>
        <authorList>
            <person name="Lin J.-L."/>
            <person name="Chen H.-C."/>
            <person name="Fang H.-I."/>
            <person name="Robinson D."/>
            <person name="Kung H.-J."/>
            <person name="Shih H.-M."/>
        </authorList>
    </citation>
    <scope>NUCLEOTIDE SEQUENCE [MRNA] (ISOFORM 1)</scope>
    <scope>FUNCTION</scope>
    <scope>CATALYTIC ACTIVITY</scope>
</reference>
<reference key="2">
    <citation type="journal article" date="2001" name="J. Biol. Chem.">
        <title>Cloning and characterization of MST4, a novel Ste20-like kinase.</title>
        <authorList>
            <person name="Qian Z."/>
            <person name="Lin C."/>
            <person name="Espinosa R."/>
            <person name="LeBeau M."/>
            <person name="Rosner M.R."/>
        </authorList>
    </citation>
    <scope>NUCLEOTIDE SEQUENCE [MRNA] (ISOFORMS 1 AND 3)</scope>
    <source>
        <tissue>Fetal brain</tissue>
    </source>
</reference>
<reference key="3">
    <citation type="journal article" date="2002" name="J. Biol. Chem.">
        <title>Cloning of MASK, a novel member of the mammalian germinal center kinase III subfamily, with apoptosis-inducing properties.</title>
        <authorList>
            <person name="Dan I."/>
            <person name="Ong S.E."/>
            <person name="Watanabe N.M."/>
            <person name="Blagoev B."/>
            <person name="Nielsen M.M."/>
            <person name="Kajikawa E."/>
            <person name="Kristiansen T.Z."/>
            <person name="Mann M."/>
            <person name="Pandey A."/>
        </authorList>
    </citation>
    <scope>NUCLEOTIDE SEQUENCE [MRNA] (ISOFORM 1)</scope>
</reference>
<reference key="4">
    <citation type="submission" date="2004-10" db="EMBL/GenBank/DDBJ databases">
        <title>Cloning of human full-length CDSs in BD Creator(TM) system donor vector.</title>
        <authorList>
            <person name="Kalnine N."/>
            <person name="Chen X."/>
            <person name="Rolfs A."/>
            <person name="Halleck A."/>
            <person name="Hines L."/>
            <person name="Eisenstein S."/>
            <person name="Koundinya M."/>
            <person name="Raphael J."/>
            <person name="Moreira D."/>
            <person name="Kelley T."/>
            <person name="LaBaer J."/>
            <person name="Lin Y."/>
            <person name="Phelan M."/>
            <person name="Farmer A."/>
        </authorList>
    </citation>
    <scope>NUCLEOTIDE SEQUENCE [LARGE SCALE MRNA] (ISOFORM 1)</scope>
</reference>
<reference key="5">
    <citation type="journal article" date="2004" name="Nat. Genet.">
        <title>Complete sequencing and characterization of 21,243 full-length human cDNAs.</title>
        <authorList>
            <person name="Ota T."/>
            <person name="Suzuki Y."/>
            <person name="Nishikawa T."/>
            <person name="Otsuki T."/>
            <person name="Sugiyama T."/>
            <person name="Irie R."/>
            <person name="Wakamatsu A."/>
            <person name="Hayashi K."/>
            <person name="Sato H."/>
            <person name="Nagai K."/>
            <person name="Kimura K."/>
            <person name="Makita H."/>
            <person name="Sekine M."/>
            <person name="Obayashi M."/>
            <person name="Nishi T."/>
            <person name="Shibahara T."/>
            <person name="Tanaka T."/>
            <person name="Ishii S."/>
            <person name="Yamamoto J."/>
            <person name="Saito K."/>
            <person name="Kawai Y."/>
            <person name="Isono Y."/>
            <person name="Nakamura Y."/>
            <person name="Nagahari K."/>
            <person name="Murakami K."/>
            <person name="Yasuda T."/>
            <person name="Iwayanagi T."/>
            <person name="Wagatsuma M."/>
            <person name="Shiratori A."/>
            <person name="Sudo H."/>
            <person name="Hosoiri T."/>
            <person name="Kaku Y."/>
            <person name="Kodaira H."/>
            <person name="Kondo H."/>
            <person name="Sugawara M."/>
            <person name="Takahashi M."/>
            <person name="Kanda K."/>
            <person name="Yokoi T."/>
            <person name="Furuya T."/>
            <person name="Kikkawa E."/>
            <person name="Omura Y."/>
            <person name="Abe K."/>
            <person name="Kamihara K."/>
            <person name="Katsuta N."/>
            <person name="Sato K."/>
            <person name="Tanikawa M."/>
            <person name="Yamazaki M."/>
            <person name="Ninomiya K."/>
            <person name="Ishibashi T."/>
            <person name="Yamashita H."/>
            <person name="Murakawa K."/>
            <person name="Fujimori K."/>
            <person name="Tanai H."/>
            <person name="Kimata M."/>
            <person name="Watanabe M."/>
            <person name="Hiraoka S."/>
            <person name="Chiba Y."/>
            <person name="Ishida S."/>
            <person name="Ono Y."/>
            <person name="Takiguchi S."/>
            <person name="Watanabe S."/>
            <person name="Yosida M."/>
            <person name="Hotuta T."/>
            <person name="Kusano J."/>
            <person name="Kanehori K."/>
            <person name="Takahashi-Fujii A."/>
            <person name="Hara H."/>
            <person name="Tanase T.-O."/>
            <person name="Nomura Y."/>
            <person name="Togiya S."/>
            <person name="Komai F."/>
            <person name="Hara R."/>
            <person name="Takeuchi K."/>
            <person name="Arita M."/>
            <person name="Imose N."/>
            <person name="Musashino K."/>
            <person name="Yuuki H."/>
            <person name="Oshima A."/>
            <person name="Sasaki N."/>
            <person name="Aotsuka S."/>
            <person name="Yoshikawa Y."/>
            <person name="Matsunawa H."/>
            <person name="Ichihara T."/>
            <person name="Shiohata N."/>
            <person name="Sano S."/>
            <person name="Moriya S."/>
            <person name="Momiyama H."/>
            <person name="Satoh N."/>
            <person name="Takami S."/>
            <person name="Terashima Y."/>
            <person name="Suzuki O."/>
            <person name="Nakagawa S."/>
            <person name="Senoh A."/>
            <person name="Mizoguchi H."/>
            <person name="Goto Y."/>
            <person name="Shimizu F."/>
            <person name="Wakebe H."/>
            <person name="Hishigaki H."/>
            <person name="Watanabe T."/>
            <person name="Sugiyama A."/>
            <person name="Takemoto M."/>
            <person name="Kawakami B."/>
            <person name="Yamazaki M."/>
            <person name="Watanabe K."/>
            <person name="Kumagai A."/>
            <person name="Itakura S."/>
            <person name="Fukuzumi Y."/>
            <person name="Fujimori Y."/>
            <person name="Komiyama M."/>
            <person name="Tashiro H."/>
            <person name="Tanigami A."/>
            <person name="Fujiwara T."/>
            <person name="Ono T."/>
            <person name="Yamada K."/>
            <person name="Fujii Y."/>
            <person name="Ozaki K."/>
            <person name="Hirao M."/>
            <person name="Ohmori Y."/>
            <person name="Kawabata A."/>
            <person name="Hikiji T."/>
            <person name="Kobatake N."/>
            <person name="Inagaki H."/>
            <person name="Ikema Y."/>
            <person name="Okamoto S."/>
            <person name="Okitani R."/>
            <person name="Kawakami T."/>
            <person name="Noguchi S."/>
            <person name="Itoh T."/>
            <person name="Shigeta K."/>
            <person name="Senba T."/>
            <person name="Matsumura K."/>
            <person name="Nakajima Y."/>
            <person name="Mizuno T."/>
            <person name="Morinaga M."/>
            <person name="Sasaki M."/>
            <person name="Togashi T."/>
            <person name="Oyama M."/>
            <person name="Hata H."/>
            <person name="Watanabe M."/>
            <person name="Komatsu T."/>
            <person name="Mizushima-Sugano J."/>
            <person name="Satoh T."/>
            <person name="Shirai Y."/>
            <person name="Takahashi Y."/>
            <person name="Nakagawa K."/>
            <person name="Okumura K."/>
            <person name="Nagase T."/>
            <person name="Nomura N."/>
            <person name="Kikuchi H."/>
            <person name="Masuho Y."/>
            <person name="Yamashita R."/>
            <person name="Nakai K."/>
            <person name="Yada T."/>
            <person name="Nakamura Y."/>
            <person name="Ohara O."/>
            <person name="Isogai T."/>
            <person name="Sugano S."/>
        </authorList>
    </citation>
    <scope>NUCLEOTIDE SEQUENCE [LARGE SCALE MRNA] (ISOFORMS 1 AND 2)</scope>
    <source>
        <tissue>Placenta</tissue>
    </source>
</reference>
<reference key="6">
    <citation type="journal article" date="2005" name="Nature">
        <title>The DNA sequence of the human X chromosome.</title>
        <authorList>
            <person name="Ross M.T."/>
            <person name="Grafham D.V."/>
            <person name="Coffey A.J."/>
            <person name="Scherer S."/>
            <person name="McLay K."/>
            <person name="Muzny D."/>
            <person name="Platzer M."/>
            <person name="Howell G.R."/>
            <person name="Burrows C."/>
            <person name="Bird C.P."/>
            <person name="Frankish A."/>
            <person name="Lovell F.L."/>
            <person name="Howe K.L."/>
            <person name="Ashurst J.L."/>
            <person name="Fulton R.S."/>
            <person name="Sudbrak R."/>
            <person name="Wen G."/>
            <person name="Jones M.C."/>
            <person name="Hurles M.E."/>
            <person name="Andrews T.D."/>
            <person name="Scott C.E."/>
            <person name="Searle S."/>
            <person name="Ramser J."/>
            <person name="Whittaker A."/>
            <person name="Deadman R."/>
            <person name="Carter N.P."/>
            <person name="Hunt S.E."/>
            <person name="Chen R."/>
            <person name="Cree A."/>
            <person name="Gunaratne P."/>
            <person name="Havlak P."/>
            <person name="Hodgson A."/>
            <person name="Metzker M.L."/>
            <person name="Richards S."/>
            <person name="Scott G."/>
            <person name="Steffen D."/>
            <person name="Sodergren E."/>
            <person name="Wheeler D.A."/>
            <person name="Worley K.C."/>
            <person name="Ainscough R."/>
            <person name="Ambrose K.D."/>
            <person name="Ansari-Lari M.A."/>
            <person name="Aradhya S."/>
            <person name="Ashwell R.I."/>
            <person name="Babbage A.K."/>
            <person name="Bagguley C.L."/>
            <person name="Ballabio A."/>
            <person name="Banerjee R."/>
            <person name="Barker G.E."/>
            <person name="Barlow K.F."/>
            <person name="Barrett I.P."/>
            <person name="Bates K.N."/>
            <person name="Beare D.M."/>
            <person name="Beasley H."/>
            <person name="Beasley O."/>
            <person name="Beck A."/>
            <person name="Bethel G."/>
            <person name="Blechschmidt K."/>
            <person name="Brady N."/>
            <person name="Bray-Allen S."/>
            <person name="Bridgeman A.M."/>
            <person name="Brown A.J."/>
            <person name="Brown M.J."/>
            <person name="Bonnin D."/>
            <person name="Bruford E.A."/>
            <person name="Buhay C."/>
            <person name="Burch P."/>
            <person name="Burford D."/>
            <person name="Burgess J."/>
            <person name="Burrill W."/>
            <person name="Burton J."/>
            <person name="Bye J.M."/>
            <person name="Carder C."/>
            <person name="Carrel L."/>
            <person name="Chako J."/>
            <person name="Chapman J.C."/>
            <person name="Chavez D."/>
            <person name="Chen E."/>
            <person name="Chen G."/>
            <person name="Chen Y."/>
            <person name="Chen Z."/>
            <person name="Chinault C."/>
            <person name="Ciccodicola A."/>
            <person name="Clark S.Y."/>
            <person name="Clarke G."/>
            <person name="Clee C.M."/>
            <person name="Clegg S."/>
            <person name="Clerc-Blankenburg K."/>
            <person name="Clifford K."/>
            <person name="Cobley V."/>
            <person name="Cole C.G."/>
            <person name="Conquer J.S."/>
            <person name="Corby N."/>
            <person name="Connor R.E."/>
            <person name="David R."/>
            <person name="Davies J."/>
            <person name="Davis C."/>
            <person name="Davis J."/>
            <person name="Delgado O."/>
            <person name="Deshazo D."/>
            <person name="Dhami P."/>
            <person name="Ding Y."/>
            <person name="Dinh H."/>
            <person name="Dodsworth S."/>
            <person name="Draper H."/>
            <person name="Dugan-Rocha S."/>
            <person name="Dunham A."/>
            <person name="Dunn M."/>
            <person name="Durbin K.J."/>
            <person name="Dutta I."/>
            <person name="Eades T."/>
            <person name="Ellwood M."/>
            <person name="Emery-Cohen A."/>
            <person name="Errington H."/>
            <person name="Evans K.L."/>
            <person name="Faulkner L."/>
            <person name="Francis F."/>
            <person name="Frankland J."/>
            <person name="Fraser A.E."/>
            <person name="Galgoczy P."/>
            <person name="Gilbert J."/>
            <person name="Gill R."/>
            <person name="Gloeckner G."/>
            <person name="Gregory S.G."/>
            <person name="Gribble S."/>
            <person name="Griffiths C."/>
            <person name="Grocock R."/>
            <person name="Gu Y."/>
            <person name="Gwilliam R."/>
            <person name="Hamilton C."/>
            <person name="Hart E.A."/>
            <person name="Hawes A."/>
            <person name="Heath P.D."/>
            <person name="Heitmann K."/>
            <person name="Hennig S."/>
            <person name="Hernandez J."/>
            <person name="Hinzmann B."/>
            <person name="Ho S."/>
            <person name="Hoffs M."/>
            <person name="Howden P.J."/>
            <person name="Huckle E.J."/>
            <person name="Hume J."/>
            <person name="Hunt P.J."/>
            <person name="Hunt A.R."/>
            <person name="Isherwood J."/>
            <person name="Jacob L."/>
            <person name="Johnson D."/>
            <person name="Jones S."/>
            <person name="de Jong P.J."/>
            <person name="Joseph S.S."/>
            <person name="Keenan S."/>
            <person name="Kelly S."/>
            <person name="Kershaw J.K."/>
            <person name="Khan Z."/>
            <person name="Kioschis P."/>
            <person name="Klages S."/>
            <person name="Knights A.J."/>
            <person name="Kosiura A."/>
            <person name="Kovar-Smith C."/>
            <person name="Laird G.K."/>
            <person name="Langford C."/>
            <person name="Lawlor S."/>
            <person name="Leversha M."/>
            <person name="Lewis L."/>
            <person name="Liu W."/>
            <person name="Lloyd C."/>
            <person name="Lloyd D.M."/>
            <person name="Loulseged H."/>
            <person name="Loveland J.E."/>
            <person name="Lovell J.D."/>
            <person name="Lozado R."/>
            <person name="Lu J."/>
            <person name="Lyne R."/>
            <person name="Ma J."/>
            <person name="Maheshwari M."/>
            <person name="Matthews L.H."/>
            <person name="McDowall J."/>
            <person name="McLaren S."/>
            <person name="McMurray A."/>
            <person name="Meidl P."/>
            <person name="Meitinger T."/>
            <person name="Milne S."/>
            <person name="Miner G."/>
            <person name="Mistry S.L."/>
            <person name="Morgan M."/>
            <person name="Morris S."/>
            <person name="Mueller I."/>
            <person name="Mullikin J.C."/>
            <person name="Nguyen N."/>
            <person name="Nordsiek G."/>
            <person name="Nyakatura G."/>
            <person name="O'dell C.N."/>
            <person name="Okwuonu G."/>
            <person name="Palmer S."/>
            <person name="Pandian R."/>
            <person name="Parker D."/>
            <person name="Parrish J."/>
            <person name="Pasternak S."/>
            <person name="Patel D."/>
            <person name="Pearce A.V."/>
            <person name="Pearson D.M."/>
            <person name="Pelan S.E."/>
            <person name="Perez L."/>
            <person name="Porter K.M."/>
            <person name="Ramsey Y."/>
            <person name="Reichwald K."/>
            <person name="Rhodes S."/>
            <person name="Ridler K.A."/>
            <person name="Schlessinger D."/>
            <person name="Schueler M.G."/>
            <person name="Sehra H.K."/>
            <person name="Shaw-Smith C."/>
            <person name="Shen H."/>
            <person name="Sheridan E.M."/>
            <person name="Shownkeen R."/>
            <person name="Skuce C.D."/>
            <person name="Smith M.L."/>
            <person name="Sotheran E.C."/>
            <person name="Steingruber H.E."/>
            <person name="Steward C.A."/>
            <person name="Storey R."/>
            <person name="Swann R.M."/>
            <person name="Swarbreck D."/>
            <person name="Tabor P.E."/>
            <person name="Taudien S."/>
            <person name="Taylor T."/>
            <person name="Teague B."/>
            <person name="Thomas K."/>
            <person name="Thorpe A."/>
            <person name="Timms K."/>
            <person name="Tracey A."/>
            <person name="Trevanion S."/>
            <person name="Tromans A.C."/>
            <person name="d'Urso M."/>
            <person name="Verduzco D."/>
            <person name="Villasana D."/>
            <person name="Waldron L."/>
            <person name="Wall M."/>
            <person name="Wang Q."/>
            <person name="Warren J."/>
            <person name="Warry G.L."/>
            <person name="Wei X."/>
            <person name="West A."/>
            <person name="Whitehead S.L."/>
            <person name="Whiteley M.N."/>
            <person name="Wilkinson J.E."/>
            <person name="Willey D.L."/>
            <person name="Williams G."/>
            <person name="Williams L."/>
            <person name="Williamson A."/>
            <person name="Williamson H."/>
            <person name="Wilming L."/>
            <person name="Woodmansey R.L."/>
            <person name="Wray P.W."/>
            <person name="Yen J."/>
            <person name="Zhang J."/>
            <person name="Zhou J."/>
            <person name="Zoghbi H."/>
            <person name="Zorilla S."/>
            <person name="Buck D."/>
            <person name="Reinhardt R."/>
            <person name="Poustka A."/>
            <person name="Rosenthal A."/>
            <person name="Lehrach H."/>
            <person name="Meindl A."/>
            <person name="Minx P.J."/>
            <person name="Hillier L.W."/>
            <person name="Willard H.F."/>
            <person name="Wilson R.K."/>
            <person name="Waterston R.H."/>
            <person name="Rice C.M."/>
            <person name="Vaudin M."/>
            <person name="Coulson A."/>
            <person name="Nelson D.L."/>
            <person name="Weinstock G."/>
            <person name="Sulston J.E."/>
            <person name="Durbin R.M."/>
            <person name="Hubbard T."/>
            <person name="Gibbs R.A."/>
            <person name="Beck S."/>
            <person name="Rogers J."/>
            <person name="Bentley D.R."/>
        </authorList>
    </citation>
    <scope>NUCLEOTIDE SEQUENCE [LARGE SCALE GENOMIC DNA]</scope>
</reference>
<reference key="7">
    <citation type="submission" date="2005-09" db="EMBL/GenBank/DDBJ databases">
        <authorList>
            <person name="Mural R.J."/>
            <person name="Istrail S."/>
            <person name="Sutton G.G."/>
            <person name="Florea L."/>
            <person name="Halpern A.L."/>
            <person name="Mobarry C.M."/>
            <person name="Lippert R."/>
            <person name="Walenz B."/>
            <person name="Shatkay H."/>
            <person name="Dew I."/>
            <person name="Miller J.R."/>
            <person name="Flanigan M.J."/>
            <person name="Edwards N.J."/>
            <person name="Bolanos R."/>
            <person name="Fasulo D."/>
            <person name="Halldorsson B.V."/>
            <person name="Hannenhalli S."/>
            <person name="Turner R."/>
            <person name="Yooseph S."/>
            <person name="Lu F."/>
            <person name="Nusskern D.R."/>
            <person name="Shue B.C."/>
            <person name="Zheng X.H."/>
            <person name="Zhong F."/>
            <person name="Delcher A.L."/>
            <person name="Huson D.H."/>
            <person name="Kravitz S.A."/>
            <person name="Mouchard L."/>
            <person name="Reinert K."/>
            <person name="Remington K.A."/>
            <person name="Clark A.G."/>
            <person name="Waterman M.S."/>
            <person name="Eichler E.E."/>
            <person name="Adams M.D."/>
            <person name="Hunkapiller M.W."/>
            <person name="Myers E.W."/>
            <person name="Venter J.C."/>
        </authorList>
    </citation>
    <scope>NUCLEOTIDE SEQUENCE [LARGE SCALE GENOMIC DNA]</scope>
</reference>
<reference key="8">
    <citation type="journal article" date="2004" name="Genome Res.">
        <title>The status, quality, and expansion of the NIH full-length cDNA project: the Mammalian Gene Collection (MGC).</title>
        <authorList>
            <consortium name="The MGC Project Team"/>
        </authorList>
    </citation>
    <scope>NUCLEOTIDE SEQUENCE [LARGE SCALE MRNA] (ISOFORM 1)</scope>
</reference>
<reference key="9">
    <citation type="journal article" date="2004" name="J. Cell Biol.">
        <title>YSK1 is activated by the Golgi matrix protein GM130 and plays a role in cell migration through its substrate 14-3-3zeta.</title>
        <authorList>
            <person name="Preisinger C."/>
            <person name="Short B."/>
            <person name="De Corte V."/>
            <person name="Bruyneel E."/>
            <person name="Haas A."/>
            <person name="Kopajtich R."/>
            <person name="Gettemans J."/>
            <person name="Barr F.A."/>
        </authorList>
    </citation>
    <scope>SUBCELLULAR LOCATION</scope>
    <scope>PHOSPHORYLATION AT THR-178</scope>
    <scope>INTERACTION WITH GOLGA2</scope>
    <scope>ACTIVITY REGULATION</scope>
</reference>
<reference key="10">
    <citation type="journal article" date="2007" name="Mol. Biol. Cell">
        <title>PDCD10 interacts with Ste20-related kinase MST4 to promote cell growth and transformation via modulation of the ERK pathway.</title>
        <authorList>
            <person name="Ma X."/>
            <person name="Zhao H."/>
            <person name="Shan J."/>
            <person name="Long F."/>
            <person name="Chen Y."/>
            <person name="Chen Y."/>
            <person name="Zhang Y."/>
            <person name="Han X."/>
            <person name="Ma D."/>
        </authorList>
    </citation>
    <scope>INTERACTION WITH PDCD10</scope>
    <scope>FUNCTION</scope>
    <scope>SUBCELLULAR LOCATION</scope>
</reference>
<reference key="11">
    <citation type="journal article" date="2008" name="Mol. Cell">
        <title>Kinase-selective enrichment enables quantitative phosphoproteomics of the kinome across the cell cycle.</title>
        <authorList>
            <person name="Daub H."/>
            <person name="Olsen J.V."/>
            <person name="Bairlein M."/>
            <person name="Gnad F."/>
            <person name="Oppermann F.S."/>
            <person name="Korner R."/>
            <person name="Greff Z."/>
            <person name="Keri G."/>
            <person name="Stemmann O."/>
            <person name="Mann M."/>
        </authorList>
    </citation>
    <scope>PHOSPHORYLATION [LARGE SCALE ANALYSIS] AT SER-4 AND THR-178</scope>
    <scope>IDENTIFICATION BY MASS SPECTROMETRY [LARGE SCALE ANALYSIS]</scope>
    <source>
        <tissue>Cervix carcinoma</tissue>
    </source>
</reference>
<reference key="12">
    <citation type="journal article" date="2008" name="Proc. Natl. Acad. Sci. U.S.A.">
        <title>A quantitative atlas of mitotic phosphorylation.</title>
        <authorList>
            <person name="Dephoure N."/>
            <person name="Zhou C."/>
            <person name="Villen J."/>
            <person name="Beausoleil S.A."/>
            <person name="Bakalarski C.E."/>
            <person name="Elledge S.J."/>
            <person name="Gygi S.P."/>
        </authorList>
    </citation>
    <scope>PHOSPHORYLATION [LARGE SCALE ANALYSIS] AT SER-300; SER-304 AND SER-306</scope>
    <scope>IDENTIFICATION BY MASS SPECTROMETRY [LARGE SCALE ANALYSIS]</scope>
    <source>
        <tissue>Cervix carcinoma</tissue>
    </source>
</reference>
<reference key="13">
    <citation type="journal article" date="2009" name="Hum. Mutat.">
        <title>Functional analyses of human and zebrafish 18-amino acid in-frame deletion pave the way for domain mapping of the cerebral cavernous malformation 3 protein.</title>
        <authorList>
            <person name="Voss K."/>
            <person name="Stahl S."/>
            <person name="Hogan B.M."/>
            <person name="Reinders J."/>
            <person name="Schleider E."/>
            <person name="Schulte-Merker S."/>
            <person name="Felbor U."/>
        </authorList>
    </citation>
    <scope>INTERACTION WITH PDCD10</scope>
</reference>
<reference key="14">
    <citation type="journal article" date="2009" name="Mol. Cell. Proteomics">
        <title>A PP2A phosphatase high density interaction network identifies a novel striatin-interacting phosphatase and kinase complex linked to the cerebral cavernous malformation 3 (CCM3) protein.</title>
        <authorList>
            <person name="Goudreault M."/>
            <person name="D'Ambrosio L.M."/>
            <person name="Kean M.J."/>
            <person name="Mullin M.J."/>
            <person name="Larsen B.G."/>
            <person name="Sanchez A."/>
            <person name="Chaudhry S."/>
            <person name="Chen G.I."/>
            <person name="Sicheri F."/>
            <person name="Nesvizhskii A.I."/>
            <person name="Aebersold R."/>
            <person name="Raught B."/>
            <person name="Gingras A.C."/>
        </authorList>
    </citation>
    <scope>INTERACTION WITH CTTNBP2NL</scope>
    <scope>IDENTIFICATION IN STRIPAK COMPLEX</scope>
    <scope>FUNCTION</scope>
</reference>
<reference key="15">
    <citation type="journal article" date="2009" name="Mol. Cell. Proteomics">
        <title>Large-scale proteomics analysis of the human kinome.</title>
        <authorList>
            <person name="Oppermann F.S."/>
            <person name="Gnad F."/>
            <person name="Olsen J.V."/>
            <person name="Hornberger R."/>
            <person name="Greff Z."/>
            <person name="Keri G."/>
            <person name="Mann M."/>
            <person name="Daub H."/>
        </authorList>
    </citation>
    <scope>ACETYLATION [LARGE SCALE ANALYSIS] AT ALA-2</scope>
    <scope>PHOSPHORYLATION [LARGE SCALE ANALYSIS] AT SER-4; THR-178 AND SER-300</scope>
    <scope>CLEAVAGE OF INITIATOR METHIONINE [LARGE SCALE ANALYSIS]</scope>
    <scope>IDENTIFICATION BY MASS SPECTROMETRY [LARGE SCALE ANALYSIS]</scope>
</reference>
<reference key="16">
    <citation type="journal article" date="2009" name="Sci. Signal.">
        <title>Quantitative phosphoproteomic analysis of T cell receptor signaling reveals system-wide modulation of protein-protein interactions.</title>
        <authorList>
            <person name="Mayya V."/>
            <person name="Lundgren D.H."/>
            <person name="Hwang S.-I."/>
            <person name="Rezaul K."/>
            <person name="Wu L."/>
            <person name="Eng J.K."/>
            <person name="Rodionov V."/>
            <person name="Han D.K."/>
        </authorList>
    </citation>
    <scope>PHOSPHORYLATION [LARGE SCALE ANALYSIS] AT THR-178</scope>
    <scope>IDENTIFICATION BY MASS SPECTROMETRY [LARGE SCALE ANALYSIS]</scope>
    <source>
        <tissue>Leukemic T-cell</tissue>
    </source>
</reference>
<reference key="17">
    <citation type="journal article" date="2010" name="J. Cell Sci.">
        <title>CCM3/PDCD10 stabilizes GCKIII proteins to promote Golgi assembly and cell orientation.</title>
        <authorList>
            <person name="Fidalgo M."/>
            <person name="Fraile M."/>
            <person name="Pires A."/>
            <person name="Force T."/>
            <person name="Pombo C."/>
            <person name="Zalvide J."/>
        </authorList>
    </citation>
    <scope>INTERACTION WITH PDCD10 AND GOLGA2</scope>
    <scope>SUBCELLULAR LOCATION</scope>
</reference>
<reference key="18">
    <citation type="journal article" date="2010" name="Sci. Signal.">
        <title>Quantitative phosphoproteomics reveals widespread full phosphorylation site occupancy during mitosis.</title>
        <authorList>
            <person name="Olsen J.V."/>
            <person name="Vermeulen M."/>
            <person name="Santamaria A."/>
            <person name="Kumar C."/>
            <person name="Miller M.L."/>
            <person name="Jensen L.J."/>
            <person name="Gnad F."/>
            <person name="Cox J."/>
            <person name="Jensen T.S."/>
            <person name="Nigg E.A."/>
            <person name="Brunak S."/>
            <person name="Mann M."/>
        </authorList>
    </citation>
    <scope>ACETYLATION [LARGE SCALE ANALYSIS] AT ALA-2</scope>
    <scope>PHOSPHORYLATION [LARGE SCALE ANALYSIS] AT SER-4</scope>
    <scope>CLEAVAGE OF INITIATOR METHIONINE [LARGE SCALE ANALYSIS]</scope>
    <scope>IDENTIFICATION BY MASS SPECTROMETRY [LARGE SCALE ANALYSIS]</scope>
    <source>
        <tissue>Cervix carcinoma</tissue>
    </source>
</reference>
<reference key="19">
    <citation type="journal article" date="2011" name="BMC Syst. Biol.">
        <title>Initial characterization of the human central proteome.</title>
        <authorList>
            <person name="Burkard T.R."/>
            <person name="Planyavsky M."/>
            <person name="Kaupe I."/>
            <person name="Breitwieser F.P."/>
            <person name="Buerckstuemmer T."/>
            <person name="Bennett K.L."/>
            <person name="Superti-Furga G."/>
            <person name="Colinge J."/>
        </authorList>
    </citation>
    <scope>IDENTIFICATION BY MASS SPECTROMETRY [LARGE SCALE ANALYSIS]</scope>
</reference>
<reference key="20">
    <citation type="journal article" date="2011" name="Sci. Signal.">
        <title>System-wide temporal characterization of the proteome and phosphoproteome of human embryonic stem cell differentiation.</title>
        <authorList>
            <person name="Rigbolt K.T."/>
            <person name="Prokhorova T.A."/>
            <person name="Akimov V."/>
            <person name="Henningsen J."/>
            <person name="Johansen P.T."/>
            <person name="Kratchmarova I."/>
            <person name="Kassem M."/>
            <person name="Mann M."/>
            <person name="Olsen J.V."/>
            <person name="Blagoev B."/>
        </authorList>
    </citation>
    <scope>ACETYLATION [LARGE SCALE ANALYSIS] AT ALA-2</scope>
    <scope>PHOSPHORYLATION [LARGE SCALE ANALYSIS] AT SER-4; SER-300; SER-304 AND SER-306</scope>
    <scope>CLEAVAGE OF INITIATOR METHIONINE [LARGE SCALE ANALYSIS]</scope>
    <scope>IDENTIFICATION BY MASS SPECTROMETRY [LARGE SCALE ANALYSIS]</scope>
</reference>
<reference key="21">
    <citation type="journal article" date="2013" name="J. Proteome Res.">
        <title>Toward a comprehensive characterization of a human cancer cell phosphoproteome.</title>
        <authorList>
            <person name="Zhou H."/>
            <person name="Di Palma S."/>
            <person name="Preisinger C."/>
            <person name="Peng M."/>
            <person name="Polat A.N."/>
            <person name="Heck A.J."/>
            <person name="Mohammed S."/>
        </authorList>
    </citation>
    <scope>PHOSPHORYLATION [LARGE SCALE ANALYSIS] AT SER-4; THR-178; SER-325; THR-327 AND THR-328</scope>
    <scope>IDENTIFICATION BY MASS SPECTROMETRY [LARGE SCALE ANALYSIS]</scope>
    <source>
        <tissue>Cervix carcinoma</tissue>
        <tissue>Erythroleukemia</tissue>
    </source>
</reference>
<reference key="22">
    <citation type="journal article" date="2014" name="J. Proteomics">
        <title>An enzyme assisted RP-RPLC approach for in-depth analysis of human liver phosphoproteome.</title>
        <authorList>
            <person name="Bian Y."/>
            <person name="Song C."/>
            <person name="Cheng K."/>
            <person name="Dong M."/>
            <person name="Wang F."/>
            <person name="Huang J."/>
            <person name="Sun D."/>
            <person name="Wang L."/>
            <person name="Ye M."/>
            <person name="Zou H."/>
        </authorList>
    </citation>
    <scope>IDENTIFICATION BY MASS SPECTROMETRY [LARGE SCALE ANALYSIS]</scope>
    <source>
        <tissue>Liver</tissue>
    </source>
</reference>
<reference key="23">
    <citation type="journal article" date="2015" name="Proteomics">
        <title>N-terminome analysis of the human mitochondrial proteome.</title>
        <authorList>
            <person name="Vaca Jacome A.S."/>
            <person name="Rabilloud T."/>
            <person name="Schaeffer-Reiss C."/>
            <person name="Rompais M."/>
            <person name="Ayoub D."/>
            <person name="Lane L."/>
            <person name="Bairoch A."/>
            <person name="Van Dorsselaer A."/>
            <person name="Carapito C."/>
        </authorList>
    </citation>
    <scope>IDENTIFICATION BY MASS SPECTROMETRY [LARGE SCALE ANALYSIS]</scope>
</reference>
<reference key="24">
    <citation type="journal article" date="2016" name="J. Cell Sci.">
        <title>RHO binding to FAM65A regulates Golgi reorientation during cell migration.</title>
        <authorList>
            <person name="Mardakheh F.K."/>
            <person name="Self A."/>
            <person name="Marshall C.J."/>
        </authorList>
    </citation>
    <scope>FUNCTION</scope>
    <scope>INTERACTION WITH RIPOR1</scope>
    <scope>SUBCELLULAR LOCATION</scope>
</reference>
<reference key="25">
    <citation type="journal article" date="2017" name="Cancer Cell">
        <title>MST4 phosphorylation of ATG4B regulates autophagic activity, tumorigenicity, and radioresistance in glioblastoma.</title>
        <authorList>
            <person name="Huang T."/>
            <person name="Kim C.K."/>
            <person name="Alvarez A.A."/>
            <person name="Pangeni R.P."/>
            <person name="Wan X."/>
            <person name="Song X."/>
            <person name="Shi T."/>
            <person name="Yang Y."/>
            <person name="Sastry N."/>
            <person name="Horbinski C.M."/>
            <person name="Lu S."/>
            <person name="Stupp R."/>
            <person name="Kessler J.A."/>
            <person name="Nishikawa R."/>
            <person name="Nakano I."/>
            <person name="Sulman E.P."/>
            <person name="Lu X."/>
            <person name="James C.D."/>
            <person name="Yin X.M."/>
            <person name="Hu B."/>
            <person name="Cheng S.Y."/>
        </authorList>
    </citation>
    <scope>FUNCTION</scope>
    <scope>CATALYTIC ACTIVITY</scope>
    <scope>MUTAGENESIS OF LYS-53</scope>
</reference>
<reference key="26">
    <citation type="journal article" date="2010" name="PLoS ONE">
        <title>Structural comparison of human mammalian ste20-like kinases.</title>
        <authorList>
            <person name="Record C.J."/>
            <person name="Chaikuad A."/>
            <person name="Rellos P."/>
            <person name="Das S."/>
            <person name="Pike A.C."/>
            <person name="Fedorov O."/>
            <person name="Marsden B.D."/>
            <person name="Knapp S."/>
            <person name="Lee W.H."/>
        </authorList>
    </citation>
    <scope>X-RAY CRYSTALLOGRAPHY (2.35 ANGSTROMS) OF 1-300 IN COMPLEX WITH QUINAZOLIN INHIBITOR</scope>
    <scope>SUBUNIT</scope>
</reference>
<reference key="27">
    <citation type="journal article" date="2007" name="Nature">
        <title>Patterns of somatic mutation in human cancer genomes.</title>
        <authorList>
            <person name="Greenman C."/>
            <person name="Stephens P."/>
            <person name="Smith R."/>
            <person name="Dalgliesh G.L."/>
            <person name="Hunter C."/>
            <person name="Bignell G."/>
            <person name="Davies H."/>
            <person name="Teague J."/>
            <person name="Butler A."/>
            <person name="Stevens C."/>
            <person name="Edkins S."/>
            <person name="O'Meara S."/>
            <person name="Vastrik I."/>
            <person name="Schmidt E.E."/>
            <person name="Avis T."/>
            <person name="Barthorpe S."/>
            <person name="Bhamra G."/>
            <person name="Buck G."/>
            <person name="Choudhury B."/>
            <person name="Clements J."/>
            <person name="Cole J."/>
            <person name="Dicks E."/>
            <person name="Forbes S."/>
            <person name="Gray K."/>
            <person name="Halliday K."/>
            <person name="Harrison R."/>
            <person name="Hills K."/>
            <person name="Hinton J."/>
            <person name="Jenkinson A."/>
            <person name="Jones D."/>
            <person name="Menzies A."/>
            <person name="Mironenko T."/>
            <person name="Perry J."/>
            <person name="Raine K."/>
            <person name="Richardson D."/>
            <person name="Shepherd R."/>
            <person name="Small A."/>
            <person name="Tofts C."/>
            <person name="Varian J."/>
            <person name="Webb T."/>
            <person name="West S."/>
            <person name="Widaa S."/>
            <person name="Yates A."/>
            <person name="Cahill D.P."/>
            <person name="Louis D.N."/>
            <person name="Goldstraw P."/>
            <person name="Nicholson A.G."/>
            <person name="Brasseur F."/>
            <person name="Looijenga L."/>
            <person name="Weber B.L."/>
            <person name="Chiew Y.-E."/>
            <person name="DeFazio A."/>
            <person name="Greaves M.F."/>
            <person name="Green A.R."/>
            <person name="Campbell P."/>
            <person name="Birney E."/>
            <person name="Easton D.F."/>
            <person name="Chenevix-Trench G."/>
            <person name="Tan M.-H."/>
            <person name="Khoo S.K."/>
            <person name="Teh B.T."/>
            <person name="Yuen S.T."/>
            <person name="Leung S.Y."/>
            <person name="Wooster R."/>
            <person name="Futreal P.A."/>
            <person name="Stratton M.R."/>
        </authorList>
    </citation>
    <scope>VARIANTS [LARGE SCALE ANALYSIS] ARG-9; TRP-36 AND CYS-45</scope>
</reference>
<name>STK26_HUMAN</name>
<evidence type="ECO:0000250" key="1">
    <source>
        <dbReference type="UniProtKB" id="Q99JT2"/>
    </source>
</evidence>
<evidence type="ECO:0000250" key="2">
    <source>
        <dbReference type="UniProtKB" id="Q9Y4P1"/>
    </source>
</evidence>
<evidence type="ECO:0000255" key="3">
    <source>
        <dbReference type="PROSITE-ProRule" id="PRU00159"/>
    </source>
</evidence>
<evidence type="ECO:0000256" key="4">
    <source>
        <dbReference type="SAM" id="MobiDB-lite"/>
    </source>
</evidence>
<evidence type="ECO:0000269" key="5">
    <source>
    </source>
</evidence>
<evidence type="ECO:0000269" key="6">
    <source>
    </source>
</evidence>
<evidence type="ECO:0000269" key="7">
    <source>
    </source>
</evidence>
<evidence type="ECO:0000269" key="8">
    <source>
    </source>
</evidence>
<evidence type="ECO:0000269" key="9">
    <source>
    </source>
</evidence>
<evidence type="ECO:0000269" key="10">
    <source>
    </source>
</evidence>
<evidence type="ECO:0000269" key="11">
    <source>
    </source>
</evidence>
<evidence type="ECO:0000269" key="12">
    <source>
    </source>
</evidence>
<evidence type="ECO:0000269" key="13">
    <source>
    </source>
</evidence>
<evidence type="ECO:0000269" key="14">
    <source>
    </source>
</evidence>
<evidence type="ECO:0000303" key="15">
    <source>
    </source>
</evidence>
<evidence type="ECO:0000303" key="16">
    <source>
    </source>
</evidence>
<evidence type="ECO:0000303" key="17">
    <source>
    </source>
</evidence>
<evidence type="ECO:0000303" key="18">
    <source>
    </source>
</evidence>
<evidence type="ECO:0000305" key="19"/>
<evidence type="ECO:0000305" key="20">
    <source>
    </source>
</evidence>
<evidence type="ECO:0000312" key="21">
    <source>
        <dbReference type="HGNC" id="HGNC:18174"/>
    </source>
</evidence>
<evidence type="ECO:0007744" key="22">
    <source>
    </source>
</evidence>
<evidence type="ECO:0007744" key="23">
    <source>
    </source>
</evidence>
<evidence type="ECO:0007744" key="24">
    <source>
    </source>
</evidence>
<evidence type="ECO:0007744" key="25">
    <source>
    </source>
</evidence>
<evidence type="ECO:0007744" key="26">
    <source>
    </source>
</evidence>
<evidence type="ECO:0007744" key="27">
    <source>
    </source>
</evidence>
<evidence type="ECO:0007744" key="28">
    <source>
    </source>
</evidence>
<evidence type="ECO:0007829" key="29">
    <source>
        <dbReference type="PDB" id="3GGF"/>
    </source>
</evidence>
<evidence type="ECO:0007829" key="30">
    <source>
        <dbReference type="PDB" id="3W8I"/>
    </source>
</evidence>
<evidence type="ECO:0007829" key="31">
    <source>
        <dbReference type="PDB" id="4FZA"/>
    </source>
</evidence>
<evidence type="ECO:0007829" key="32">
    <source>
        <dbReference type="PDB" id="4FZD"/>
    </source>
</evidence>
<evidence type="ECO:0007829" key="33">
    <source>
        <dbReference type="PDB" id="4GEH"/>
    </source>
</evidence>
<evidence type="ECO:0007829" key="34">
    <source>
        <dbReference type="PDB" id="5YF4"/>
    </source>
</evidence>
<evidence type="ECO:0007829" key="35">
    <source>
        <dbReference type="PDB" id="7B36"/>
    </source>
</evidence>
<sequence>MAHSPVAVQVPGMQNNIADPEELFTKLERIGKGSFGEVFKGIDNRTQQVVAIKIIDLEEAEDEIEDIQQEITVLSQCDSSYVTKYYGSYLKGSKLWIIMEYLGGGSALDLLRAGPFDEFQIATMLKEILKGLDYLHSEKKIHRDIKAANVLLSEQGDVKLADFGVAGQLTDTQIKRNTFVGTPFWMAPEVIQQSAYDSKADIWSLGITAIELAKGEPPNSDMHPMRVLFLIPKNNPPTLVGDFTKSFKEFIDACLNKDPSFRPTAKELLKHKFIVKNSKKTSYLTELIDRFKRWKAEGHSDDESDSEGSDSESTSRENNTHPEWSFTTVRKKPDPKKVQNGAEQDLVQTLSCLSMIITPAFAELKQQDENNASRNQAIEELEKSIAVAEAACPGITDKMVKKLIEKFQKCSADESP</sequence>
<gene>
    <name evidence="21" type="primary">STK26</name>
    <name evidence="17" type="synonym">MASK</name>
    <name evidence="16" type="synonym">MST4</name>
</gene>